<comment type="function">
    <text evidence="5">Histone demethylase that demethylates 'Arg-3' (H4R3me) of histone H4 with a specific activity for H4R3me2 (PubMed:22483719). Involved in the positive regulation of gene expression (PubMed:22483719). Together with JMJ20, positively regulates seed germination by promoting the removal of repressive histone arginine methylations (e.g. H4R3me2) at GA3ox1 and GA3ox2 to trigger gibberellic acid (GA) biosynthesis (PubMed:22483719).</text>
</comment>
<comment type="catalytic activity">
    <reaction evidence="5">
        <text>N(omega),N(omega)-dimethyl-L-arginyl-[protein] + 2-oxoglutarate + O2 = N(omega)-methyl-L-arginyl-[protein] + formaldehyde + succinate + CO2</text>
        <dbReference type="Rhea" id="RHEA:58352"/>
        <dbReference type="Rhea" id="RHEA-COMP:11990"/>
        <dbReference type="Rhea" id="RHEA-COMP:11991"/>
        <dbReference type="ChEBI" id="CHEBI:15379"/>
        <dbReference type="ChEBI" id="CHEBI:16526"/>
        <dbReference type="ChEBI" id="CHEBI:16810"/>
        <dbReference type="ChEBI" id="CHEBI:16842"/>
        <dbReference type="ChEBI" id="CHEBI:30031"/>
        <dbReference type="ChEBI" id="CHEBI:61897"/>
        <dbReference type="ChEBI" id="CHEBI:65280"/>
    </reaction>
    <physiologicalReaction direction="left-to-right" evidence="5">
        <dbReference type="Rhea" id="RHEA:58353"/>
    </physiologicalReaction>
</comment>
<comment type="cofactor">
    <cofactor evidence="1">
        <name>Fe(2+)</name>
        <dbReference type="ChEBI" id="CHEBI:29033"/>
    </cofactor>
    <text evidence="1">Binds 1 Fe(2+) ion per subunit.</text>
</comment>
<comment type="subcellular location">
    <subcellularLocation>
        <location evidence="5">Nucleus</location>
    </subcellularLocation>
</comment>
<comment type="alternative products">
    <event type="alternative splicing"/>
    <isoform>
        <id>Q67XX3-1</id>
        <name>1</name>
        <sequence type="displayed"/>
    </isoform>
    <isoform>
        <id>Q67XX3-2</id>
        <name>2</name>
        <sequence type="described" ref="VSP_024322"/>
    </isoform>
</comment>
<comment type="tissue specificity">
    <text evidence="4">Expressed in inflorescences, roots and siliques, and, at low levels, in leaves and stems.</text>
</comment>
<comment type="developmental stage">
    <text evidence="5">In far-red light (FR)-treated seeds, mainly observed in the radicle of the embryo (PubMed:22483719). Accumulates upon red light (R) in cotyledons (PubMed:22483719).</text>
</comment>
<comment type="induction">
    <text evidence="5">Repressed by the zinc-finger protein SOMNUS when PHYB is inactive in far-red (FR) conditions, but derepressed upon PHYB activation by red light (R).</text>
</comment>
<comment type="disruption phenotype">
    <text evidence="5">Plants missing both JMJ20 and JMJ22 exhibit reduced seed germination efficiency during PHYB activation after red light (R)-pulse treatment due to an impaired H4R3me2 removal-dependent derepression of GA3ox1 and GA3ox2 causing lower endogenous gibberellic acid (GA) biosynthesis.</text>
</comment>
<comment type="similarity">
    <text evidence="8">Belongs to the JARID1 histone demethylase family.</text>
</comment>
<feature type="chain" id="PRO_0000283519" description="Arginine-specific demethylase JMJ22">
    <location>
        <begin position="1"/>
        <end position="502"/>
    </location>
</feature>
<feature type="domain" description="F-box">
    <location>
        <begin position="80"/>
        <end position="126"/>
    </location>
</feature>
<feature type="domain" description="JmjC" evidence="2">
    <location>
        <begin position="279"/>
        <end position="439"/>
    </location>
</feature>
<feature type="region of interest" description="Disordered" evidence="3">
    <location>
        <begin position="15"/>
        <end position="45"/>
    </location>
</feature>
<feature type="compositionally biased region" description="Basic and acidic residues" evidence="3">
    <location>
        <begin position="24"/>
        <end position="35"/>
    </location>
</feature>
<feature type="binding site" evidence="2">
    <location>
        <position position="324"/>
    </location>
    <ligand>
        <name>Fe cation</name>
        <dbReference type="ChEBI" id="CHEBI:24875"/>
        <note>catalytic</note>
    </ligand>
</feature>
<feature type="binding site" evidence="2">
    <location>
        <position position="326"/>
    </location>
    <ligand>
        <name>Fe cation</name>
        <dbReference type="ChEBI" id="CHEBI:24875"/>
        <note>catalytic</note>
    </ligand>
</feature>
<feature type="binding site" evidence="2">
    <location>
        <position position="407"/>
    </location>
    <ligand>
        <name>Fe cation</name>
        <dbReference type="ChEBI" id="CHEBI:24875"/>
        <note>catalytic</note>
    </ligand>
</feature>
<feature type="splice variant" id="VSP_024322" description="In isoform 2." evidence="7">
    <location>
        <begin position="427"/>
        <end position="502"/>
    </location>
</feature>
<proteinExistence type="evidence at protein level"/>
<evidence type="ECO:0000250" key="1">
    <source>
        <dbReference type="UniProtKB" id="Q8GUI6"/>
    </source>
</evidence>
<evidence type="ECO:0000255" key="2">
    <source>
        <dbReference type="PROSITE-ProRule" id="PRU00538"/>
    </source>
</evidence>
<evidence type="ECO:0000256" key="3">
    <source>
        <dbReference type="SAM" id="MobiDB-lite"/>
    </source>
</evidence>
<evidence type="ECO:0000269" key="4">
    <source>
    </source>
</evidence>
<evidence type="ECO:0000269" key="5">
    <source>
    </source>
</evidence>
<evidence type="ECO:0000303" key="6">
    <source>
    </source>
</evidence>
<evidence type="ECO:0000303" key="7">
    <source ref="3"/>
</evidence>
<evidence type="ECO:0000305" key="8"/>
<evidence type="ECO:0000312" key="9">
    <source>
        <dbReference type="Araport" id="AT5G06550"/>
    </source>
</evidence>
<evidence type="ECO:0000312" key="10">
    <source>
        <dbReference type="EMBL" id="BAB11404.1"/>
    </source>
</evidence>
<dbReference type="EC" id="1.14.11.-" evidence="5"/>
<dbReference type="EMBL" id="AP002543">
    <property type="protein sequence ID" value="BAB11404.1"/>
    <property type="molecule type" value="Genomic_DNA"/>
</dbReference>
<dbReference type="EMBL" id="CP002688">
    <property type="protein sequence ID" value="AED91033.1"/>
    <property type="molecule type" value="Genomic_DNA"/>
</dbReference>
<dbReference type="EMBL" id="BT012560">
    <property type="protein sequence ID" value="AAS99704.1"/>
    <property type="molecule type" value="mRNA"/>
</dbReference>
<dbReference type="EMBL" id="AK175402">
    <property type="protein sequence ID" value="BAD43165.1"/>
    <property type="molecule type" value="mRNA"/>
</dbReference>
<dbReference type="EMBL" id="AK176695">
    <property type="protein sequence ID" value="BAD44458.1"/>
    <property type="molecule type" value="mRNA"/>
</dbReference>
<dbReference type="RefSeq" id="NP_196273.3">
    <molecule id="Q67XX3-1"/>
    <property type="nucleotide sequence ID" value="NM_120738.5"/>
</dbReference>
<dbReference type="SMR" id="Q67XX3"/>
<dbReference type="BioGRID" id="15822">
    <property type="interactions" value="3"/>
</dbReference>
<dbReference type="FunCoup" id="Q67XX3">
    <property type="interactions" value="860"/>
</dbReference>
<dbReference type="IntAct" id="Q67XX3">
    <property type="interactions" value="3"/>
</dbReference>
<dbReference type="STRING" id="3702.Q67XX3"/>
<dbReference type="PaxDb" id="3702-AT5G06550.1"/>
<dbReference type="ProteomicsDB" id="232056">
    <molecule id="Q67XX3-1"/>
</dbReference>
<dbReference type="EnsemblPlants" id="AT5G06550.1">
    <molecule id="Q67XX3-1"/>
    <property type="protein sequence ID" value="AT5G06550.1"/>
    <property type="gene ID" value="AT5G06550"/>
</dbReference>
<dbReference type="GeneID" id="830543"/>
<dbReference type="Gramene" id="AT5G06550.1">
    <molecule id="Q67XX3-1"/>
    <property type="protein sequence ID" value="AT5G06550.1"/>
    <property type="gene ID" value="AT5G06550"/>
</dbReference>
<dbReference type="KEGG" id="ath:AT5G06550"/>
<dbReference type="Araport" id="AT5G06550"/>
<dbReference type="TAIR" id="AT5G06550">
    <property type="gene designation" value="JMJ22"/>
</dbReference>
<dbReference type="eggNOG" id="KOG2130">
    <property type="taxonomic scope" value="Eukaryota"/>
</dbReference>
<dbReference type="HOGENOM" id="CLU_016785_1_2_1"/>
<dbReference type="InParanoid" id="Q67XX3"/>
<dbReference type="OMA" id="WPAYKNW"/>
<dbReference type="PhylomeDB" id="Q67XX3"/>
<dbReference type="PRO" id="PR:Q67XX3"/>
<dbReference type="Proteomes" id="UP000006548">
    <property type="component" value="Chromosome 5"/>
</dbReference>
<dbReference type="ExpressionAtlas" id="Q67XX3">
    <property type="expression patterns" value="baseline and differential"/>
</dbReference>
<dbReference type="GO" id="GO:0005634">
    <property type="term" value="C:nucleus"/>
    <property type="evidence" value="ECO:0000314"/>
    <property type="project" value="TAIR"/>
</dbReference>
<dbReference type="GO" id="GO:0000987">
    <property type="term" value="F:cis-regulatory region sequence-specific DNA binding"/>
    <property type="evidence" value="ECO:0000314"/>
    <property type="project" value="TAIR"/>
</dbReference>
<dbReference type="GO" id="GO:0046872">
    <property type="term" value="F:metal ion binding"/>
    <property type="evidence" value="ECO:0007669"/>
    <property type="project" value="UniProtKB-KW"/>
</dbReference>
<dbReference type="GO" id="GO:0016491">
    <property type="term" value="F:oxidoreductase activity"/>
    <property type="evidence" value="ECO:0007669"/>
    <property type="project" value="UniProtKB-KW"/>
</dbReference>
<dbReference type="GO" id="GO:0000976">
    <property type="term" value="F:transcription cis-regulatory region binding"/>
    <property type="evidence" value="ECO:0000353"/>
    <property type="project" value="TAIR"/>
</dbReference>
<dbReference type="GO" id="GO:0040029">
    <property type="term" value="P:epigenetic regulation of gene expression"/>
    <property type="evidence" value="ECO:0000314"/>
    <property type="project" value="UniProtKB"/>
</dbReference>
<dbReference type="GO" id="GO:0009740">
    <property type="term" value="P:gibberellic acid mediated signaling pathway"/>
    <property type="evidence" value="ECO:0007669"/>
    <property type="project" value="UniProtKB-KW"/>
</dbReference>
<dbReference type="GO" id="GO:0010476">
    <property type="term" value="P:gibberellin mediated signaling pathway"/>
    <property type="evidence" value="ECO:0000315"/>
    <property type="project" value="UniProtKB"/>
</dbReference>
<dbReference type="GO" id="GO:0010030">
    <property type="term" value="P:positive regulation of seed germination"/>
    <property type="evidence" value="ECO:0000315"/>
    <property type="project" value="UniProtKB"/>
</dbReference>
<dbReference type="GO" id="GO:0010099">
    <property type="term" value="P:regulation of photomorphogenesis"/>
    <property type="evidence" value="ECO:0000315"/>
    <property type="project" value="UniProtKB"/>
</dbReference>
<dbReference type="GO" id="GO:0010114">
    <property type="term" value="P:response to red light"/>
    <property type="evidence" value="ECO:0000315"/>
    <property type="project" value="UniProtKB"/>
</dbReference>
<dbReference type="FunFam" id="2.60.120.650:FF:000045">
    <property type="entry name" value="F-box protein At1g78280"/>
    <property type="match status" value="1"/>
</dbReference>
<dbReference type="Gene3D" id="1.20.1280.50">
    <property type="match status" value="1"/>
</dbReference>
<dbReference type="Gene3D" id="2.60.120.650">
    <property type="entry name" value="Cupin"/>
    <property type="match status" value="1"/>
</dbReference>
<dbReference type="InterPro" id="IPR041667">
    <property type="entry name" value="Cupin_8"/>
</dbReference>
<dbReference type="InterPro" id="IPR036047">
    <property type="entry name" value="F-box-like_dom_sf"/>
</dbReference>
<dbReference type="InterPro" id="IPR003347">
    <property type="entry name" value="JmjC_dom"/>
</dbReference>
<dbReference type="InterPro" id="IPR050910">
    <property type="entry name" value="JMJD6_ArgDemeth/LysHydrox"/>
</dbReference>
<dbReference type="PANTHER" id="PTHR12480">
    <property type="entry name" value="ARGININE DEMETHYLASE AND LYSYL-HYDROXYLASE JMJD"/>
    <property type="match status" value="1"/>
</dbReference>
<dbReference type="PANTHER" id="PTHR12480:SF21">
    <property type="entry name" value="JMJC DOMAIN-CONTAINING PROTEIN 8"/>
    <property type="match status" value="1"/>
</dbReference>
<dbReference type="Pfam" id="PF13621">
    <property type="entry name" value="Cupin_8"/>
    <property type="match status" value="1"/>
</dbReference>
<dbReference type="SMART" id="SM00558">
    <property type="entry name" value="JmjC"/>
    <property type="match status" value="1"/>
</dbReference>
<dbReference type="SUPFAM" id="SSF51197">
    <property type="entry name" value="Clavaminate synthase-like"/>
    <property type="match status" value="1"/>
</dbReference>
<dbReference type="SUPFAM" id="SSF81383">
    <property type="entry name" value="F-box domain"/>
    <property type="match status" value="1"/>
</dbReference>
<dbReference type="PROSITE" id="PS51184">
    <property type="entry name" value="JMJC"/>
    <property type="match status" value="1"/>
</dbReference>
<name>JMJ22_ARATH</name>
<organism>
    <name type="scientific">Arabidopsis thaliana</name>
    <name type="common">Mouse-ear cress</name>
    <dbReference type="NCBI Taxonomy" id="3702"/>
    <lineage>
        <taxon>Eukaryota</taxon>
        <taxon>Viridiplantae</taxon>
        <taxon>Streptophyta</taxon>
        <taxon>Embryophyta</taxon>
        <taxon>Tracheophyta</taxon>
        <taxon>Spermatophyta</taxon>
        <taxon>Magnoliopsida</taxon>
        <taxon>eudicotyledons</taxon>
        <taxon>Gunneridae</taxon>
        <taxon>Pentapetalae</taxon>
        <taxon>rosids</taxon>
        <taxon>malvids</taxon>
        <taxon>Brassicales</taxon>
        <taxon>Brassicaceae</taxon>
        <taxon>Camelineae</taxon>
        <taxon>Arabidopsis</taxon>
    </lineage>
</organism>
<protein>
    <recommendedName>
        <fullName evidence="6">Arginine-specific demethylase JMJ22</fullName>
        <ecNumber evidence="5">1.14.11.-</ecNumber>
    </recommendedName>
    <alternativeName>
        <fullName evidence="6">Arginine-specific histone demethylase JMJ22</fullName>
    </alternativeName>
    <alternativeName>
        <fullName>F-box protein JMJ22</fullName>
    </alternativeName>
    <alternativeName>
        <fullName evidence="6">Jumonji domain-containing protein 22</fullName>
        <shortName evidence="6">AtJMJ22</shortName>
        <shortName evidence="6">Protein JUMONJI 22</shortName>
    </alternativeName>
    <alternativeName>
        <fullName evidence="8">[histone H4]-dimethyl-L-arginine(3) monodemethylase JMJ22</fullName>
    </alternativeName>
</protein>
<gene>
    <name evidence="6" type="primary">JMJ22</name>
    <name evidence="9" type="ordered locus">At5g06550</name>
    <name evidence="10" type="ORF">F15M7.8</name>
</gene>
<keyword id="KW-0025">Alternative splicing</keyword>
<keyword id="KW-0939">Gibberellin signaling pathway</keyword>
<keyword id="KW-0408">Iron</keyword>
<keyword id="KW-0479">Metal-binding</keyword>
<keyword id="KW-0539">Nucleus</keyword>
<keyword id="KW-0560">Oxidoreductase</keyword>
<keyword id="KW-1185">Reference proteome</keyword>
<reference key="1">
    <citation type="submission" date="2000-06" db="EMBL/GenBank/DDBJ databases">
        <title>Structural analysis of Arabidopsis thaliana chromosome 5. XI.</title>
        <authorList>
            <person name="Kaneko T."/>
            <person name="Katoh T."/>
            <person name="Asamizu E."/>
            <person name="Sato S."/>
            <person name="Nakamura Y."/>
            <person name="Kotani H."/>
            <person name="Tabata S."/>
        </authorList>
    </citation>
    <scope>NUCLEOTIDE SEQUENCE [LARGE SCALE GENOMIC DNA]</scope>
    <source>
        <strain>cv. Columbia</strain>
    </source>
</reference>
<reference key="2">
    <citation type="journal article" date="2017" name="Plant J.">
        <title>Araport11: a complete reannotation of the Arabidopsis thaliana reference genome.</title>
        <authorList>
            <person name="Cheng C.Y."/>
            <person name="Krishnakumar V."/>
            <person name="Chan A.P."/>
            <person name="Thibaud-Nissen F."/>
            <person name="Schobel S."/>
            <person name="Town C.D."/>
        </authorList>
    </citation>
    <scope>GENOME REANNOTATION</scope>
    <source>
        <strain>cv. Columbia</strain>
    </source>
</reference>
<reference key="3">
    <citation type="submission" date="2004-04" db="EMBL/GenBank/DDBJ databases">
        <title>Arabidopsis ORF clones.</title>
        <authorList>
            <person name="Kim C.J."/>
            <person name="Chen H."/>
            <person name="Cheuk R.F."/>
            <person name="Shinn P."/>
            <person name="Carninci P."/>
            <person name="Hayashizaki Y."/>
            <person name="Ishida J."/>
            <person name="Kamiya A."/>
            <person name="Kawai J."/>
            <person name="Narusaka M."/>
            <person name="Sakurai T."/>
            <person name="Satou M."/>
            <person name="Seki M."/>
            <person name="Shinozaki K."/>
            <person name="Ecker J.R."/>
        </authorList>
    </citation>
    <scope>NUCLEOTIDE SEQUENCE [LARGE SCALE MRNA] (ISOFORM 2)</scope>
    <source>
        <strain>cv. Columbia</strain>
    </source>
</reference>
<reference key="4">
    <citation type="submission" date="2004-09" db="EMBL/GenBank/DDBJ databases">
        <title>Large-scale analysis of RIKEN Arabidopsis full-length (RAFL) cDNAs.</title>
        <authorList>
            <person name="Totoki Y."/>
            <person name="Seki M."/>
            <person name="Ishida J."/>
            <person name="Nakajima M."/>
            <person name="Enju A."/>
            <person name="Kamiya A."/>
            <person name="Narusaka M."/>
            <person name="Shin-i T."/>
            <person name="Nakagawa M."/>
            <person name="Sakamoto N."/>
            <person name="Oishi K."/>
            <person name="Kohara Y."/>
            <person name="Kobayashi M."/>
            <person name="Toyoda A."/>
            <person name="Sakaki Y."/>
            <person name="Sakurai T."/>
            <person name="Iida K."/>
            <person name="Akiyama K."/>
            <person name="Satou M."/>
            <person name="Toyoda T."/>
            <person name="Konagaya A."/>
            <person name="Carninci P."/>
            <person name="Kawai J."/>
            <person name="Hayashizaki Y."/>
            <person name="Shinozaki K."/>
        </authorList>
    </citation>
    <scope>NUCLEOTIDE SEQUENCE [LARGE SCALE MRNA] (ISOFORM 1)</scope>
    <source>
        <strain>cv. Columbia</strain>
    </source>
</reference>
<reference key="5">
    <citation type="journal article" date="2008" name="J. Integr. Plant Biol.">
        <title>Comparative analysis of JmjC domain-containing proteins reveals the potential histone demethylases in Arabidopsis and rice.</title>
        <authorList>
            <person name="Lu F."/>
            <person name="Li G."/>
            <person name="Cui X."/>
            <person name="Liu C."/>
            <person name="Wang X.-J."/>
            <person name="Cao X."/>
        </authorList>
    </citation>
    <scope>GENE FAMILY</scope>
    <scope>NOMENCLATURE</scope>
    <scope>TISSUE SPECIFICITY</scope>
</reference>
<reference key="6">
    <citation type="journal article" date="2012" name="Dev. Cell">
        <title>Control of seed germination by light-induced histone arginine demethylation activity.</title>
        <authorList>
            <person name="Cho J.-N."/>
            <person name="Ryu J.-Y."/>
            <person name="Jeong Y.-M."/>
            <person name="Park J."/>
            <person name="Song J.-J."/>
            <person name="Amasino R.M."/>
            <person name="Noh B."/>
            <person name="Noh Y.-S."/>
        </authorList>
    </citation>
    <scope>FUNCTION</scope>
    <scope>DISRUPTION PHENOTYPE</scope>
    <scope>CATALYTIC ACTIVITY</scope>
    <scope>INDUCTION BY RED LIGHT</scope>
    <scope>SUBCELLULAR LOCATION</scope>
    <scope>DEVELOPMENTAL STAGE</scope>
    <source>
        <strain>cv. Columbia</strain>
    </source>
</reference>
<accession>Q67XX3</accession>
<accession>Q9FG15</accession>
<sequence>MPKCKNLLLTSKRRKSKSKRLKLHQHEPESLFPEKEVEEEDEDEGGFKLKIAAPSQEHGVQPLGNLYFNPGAVNVRNTGLGNLQILSDELVLDILGLLGANHLGVLATVTKSFYIFANHEPLWRNLVLEELKGDFLFNGSWRSTYVAAYHPKFKFAGDGESNLKIIDFYSDYLFQSWLCANLEMKPKWLRRDNITRVRGISVEDFITKFEEPNKPVLLEGCLDGWPAIEKWSRDYLTKVVGDVEFAVGPVEMKLEKYFRYSDGAREERPLYLFDPKFAEKVPVLDSEYDVPVYFREDLFGVLGNERPDYRWIIIGPAGSGSSFHIDPNSTSAWNAVITGSKKWVLFPPDVVPPGVHPSPDGAEVACPVSIIEWFMNFYDDTKDWEKKPIECICKAGEVMFVPNGWWHLVINLEESIAITQNYASRSNLLNVLEFLKKPNAKELVSGTTDRENLHDKFKKAIEEAYPGTIQELEKKAEEAKRAEEQRVSFWDSAKTDTFKFSF</sequence>